<keyword id="KW-0150">Chloroplast</keyword>
<keyword id="KW-0472">Membrane</keyword>
<keyword id="KW-0602">Photosynthesis</keyword>
<keyword id="KW-0604">Photosystem II</keyword>
<keyword id="KW-0934">Plastid</keyword>
<keyword id="KW-0674">Reaction center</keyword>
<keyword id="KW-0793">Thylakoid</keyword>
<keyword id="KW-0812">Transmembrane</keyword>
<keyword id="KW-1133">Transmembrane helix</keyword>
<geneLocation type="chloroplast"/>
<reference key="1">
    <citation type="journal article" date="2002" name="Am. J. Bot.">
        <title>Monophyly of the Convolvulaceae and circumscription of their major lineages based on DNA sequences of multiple chloroplast loci.</title>
        <authorList>
            <person name="Stefanovic S."/>
            <person name="Krueger L."/>
            <person name="Olmstead R.G."/>
        </authorList>
        <dbReference type="AGRICOLA" id="IND23320510"/>
    </citation>
    <scope>NUCLEOTIDE SEQUENCE [GENOMIC DNA]</scope>
</reference>
<comment type="function">
    <text evidence="1">One of the components of the core complex of photosystem II (PSII). PSII is a light-driven water:plastoquinone oxidoreductase that uses light energy to abstract electrons from H(2)O, generating O(2) and a proton gradient subsequently used for ATP formation. It consists of a core antenna complex that captures photons, and an electron transfer chain that converts photonic excitation into a charge separation. This subunit is found at the monomer-monomer interface and is required for correct PSII assembly and/or dimerization.</text>
</comment>
<comment type="subunit">
    <text evidence="1">PSII is composed of 1 copy each of membrane proteins PsbA, PsbB, PsbC, PsbD, PsbE, PsbF, PsbH, PsbI, PsbJ, PsbK, PsbL, PsbM, PsbT, PsbX, PsbY, PsbZ, Psb30/Ycf12, at least 3 peripheral proteins of the oxygen-evolving complex and a large number of cofactors. It forms dimeric complexes.</text>
</comment>
<comment type="subcellular location">
    <subcellularLocation>
        <location evidence="1">Plastid</location>
        <location evidence="1">Chloroplast thylakoid membrane</location>
        <topology evidence="1">Single-pass membrane protein</topology>
    </subcellularLocation>
</comment>
<comment type="similarity">
    <text evidence="1">Belongs to the PsbL family.</text>
</comment>
<accession>Q7H8K8</accession>
<protein>
    <recommendedName>
        <fullName evidence="1">Photosystem II reaction center protein L</fullName>
        <shortName evidence="1">PSII-L</shortName>
    </recommendedName>
</protein>
<feature type="chain" id="PRO_0000219726" description="Photosystem II reaction center protein L">
    <location>
        <begin position="1"/>
        <end position="38"/>
    </location>
</feature>
<feature type="transmembrane region" description="Helical" evidence="1">
    <location>
        <begin position="17"/>
        <end position="37"/>
    </location>
</feature>
<sequence>MTQSNPNEQNVELNRTSLYWGLLLIFVLAVLFSNYFFN</sequence>
<evidence type="ECO:0000255" key="1">
    <source>
        <dbReference type="HAMAP-Rule" id="MF_01317"/>
    </source>
</evidence>
<dbReference type="EMBL" id="AY100856">
    <property type="protein sequence ID" value="AAM55547.1"/>
    <property type="molecule type" value="Genomic_DNA"/>
</dbReference>
<dbReference type="RefSeq" id="YP_010128511.1">
    <property type="nucleotide sequence ID" value="NC_056300.1"/>
</dbReference>
<dbReference type="SMR" id="Q7H8K8"/>
<dbReference type="GeneID" id="65335554"/>
<dbReference type="GO" id="GO:0009535">
    <property type="term" value="C:chloroplast thylakoid membrane"/>
    <property type="evidence" value="ECO:0007669"/>
    <property type="project" value="UniProtKB-SubCell"/>
</dbReference>
<dbReference type="GO" id="GO:0009539">
    <property type="term" value="C:photosystem II reaction center"/>
    <property type="evidence" value="ECO:0007669"/>
    <property type="project" value="InterPro"/>
</dbReference>
<dbReference type="GO" id="GO:0015979">
    <property type="term" value="P:photosynthesis"/>
    <property type="evidence" value="ECO:0007669"/>
    <property type="project" value="UniProtKB-UniRule"/>
</dbReference>
<dbReference type="HAMAP" id="MF_01317">
    <property type="entry name" value="PSII_PsbL"/>
    <property type="match status" value="1"/>
</dbReference>
<dbReference type="InterPro" id="IPR003372">
    <property type="entry name" value="PSII_PsbL"/>
</dbReference>
<dbReference type="InterPro" id="IPR037266">
    <property type="entry name" value="PSII_PsbL_sf"/>
</dbReference>
<dbReference type="NCBIfam" id="NF001972">
    <property type="entry name" value="PRK00753.1"/>
    <property type="match status" value="1"/>
</dbReference>
<dbReference type="Pfam" id="PF02419">
    <property type="entry name" value="PsbL"/>
    <property type="match status" value="1"/>
</dbReference>
<dbReference type="SUPFAM" id="SSF161017">
    <property type="entry name" value="Photosystem II reaction center protein L, PsbL"/>
    <property type="match status" value="1"/>
</dbReference>
<gene>
    <name evidence="1" type="primary">psbL</name>
</gene>
<organism>
    <name type="scientific">Ipomoea aquatica</name>
    <name type="common">Water spinach</name>
    <name type="synonym">Ipomoea reptans</name>
    <dbReference type="NCBI Taxonomy" id="89636"/>
    <lineage>
        <taxon>Eukaryota</taxon>
        <taxon>Viridiplantae</taxon>
        <taxon>Streptophyta</taxon>
        <taxon>Embryophyta</taxon>
        <taxon>Tracheophyta</taxon>
        <taxon>Spermatophyta</taxon>
        <taxon>Magnoliopsida</taxon>
        <taxon>eudicotyledons</taxon>
        <taxon>Gunneridae</taxon>
        <taxon>Pentapetalae</taxon>
        <taxon>asterids</taxon>
        <taxon>lamiids</taxon>
        <taxon>Solanales</taxon>
        <taxon>Convolvulaceae</taxon>
        <taxon>Ipomoeeae</taxon>
        <taxon>Ipomoea</taxon>
    </lineage>
</organism>
<name>PSBL_IPOAQ</name>
<proteinExistence type="inferred from homology"/>